<comment type="function">
    <text evidence="1">The phosphoenolpyruvate-dependent sugar phosphotransferase system (sugar PTS), a major carbohydrate active transport system, catalyzes the phosphorylation of incoming sugar substrates concomitantly with their translocation across the cell membrane. The enzyme II FryABC PTS system is involved in fructose transport.</text>
</comment>
<comment type="catalytic activity">
    <reaction evidence="1">
        <text>D-fructose(out) + N(pros)-phospho-L-histidyl-[protein] = D-fructose 1-phosphate(in) + L-histidyl-[protein]</text>
        <dbReference type="Rhea" id="RHEA:49252"/>
        <dbReference type="Rhea" id="RHEA-COMP:9745"/>
        <dbReference type="Rhea" id="RHEA-COMP:9746"/>
        <dbReference type="ChEBI" id="CHEBI:29979"/>
        <dbReference type="ChEBI" id="CHEBI:37721"/>
        <dbReference type="ChEBI" id="CHEBI:58674"/>
        <dbReference type="ChEBI" id="CHEBI:64837"/>
        <dbReference type="EC" id="2.7.1.202"/>
    </reaction>
</comment>
<comment type="subcellular location">
    <subcellularLocation>
        <location evidence="3">Cytoplasm</location>
    </subcellularLocation>
</comment>
<comment type="domain">
    <text evidence="2">The PTS EIIB type-2 domain is phosphorylated by phospho-EIIA on a cysteinyl residue. Then, it transfers the phosphoryl group to the sugar substrate concomitantly with the sugar uptake processed by the PTS EIIC type-2 domain.</text>
</comment>
<gene>
    <name type="primary">fryB</name>
    <name type="ordered locus">SF2453</name>
    <name type="ordered locus">S2592</name>
</gene>
<organism>
    <name type="scientific">Shigella flexneri</name>
    <dbReference type="NCBI Taxonomy" id="623"/>
    <lineage>
        <taxon>Bacteria</taxon>
        <taxon>Pseudomonadati</taxon>
        <taxon>Pseudomonadota</taxon>
        <taxon>Gammaproteobacteria</taxon>
        <taxon>Enterobacterales</taxon>
        <taxon>Enterobacteriaceae</taxon>
        <taxon>Shigella</taxon>
    </lineage>
</organism>
<name>PTFB1_SHIFL</name>
<sequence length="108" mass="11763">MSKKLIALCACPMGLAHTFMAAQVLEEAAVEAGYEVKIETQGADGIQNRLTAQDIAEATIIIHSVAVTPEDNERFESRDVYEITLQDAIKNAAGIIKEIEEMIASEQQ</sequence>
<proteinExistence type="inferred from homology"/>
<feature type="chain" id="PRO_0000186703" description="PTS system fructose-like EIIB component 1">
    <location>
        <begin position="1"/>
        <end position="108"/>
    </location>
</feature>
<feature type="domain" description="PTS EIIB type-2" evidence="2">
    <location>
        <begin position="1"/>
        <end position="101"/>
    </location>
</feature>
<feature type="active site" description="Phosphocysteine intermediate" evidence="1 3">
    <location>
        <position position="11"/>
    </location>
</feature>
<feature type="modified residue" description="Phosphocysteine; by EIIA" evidence="2">
    <location>
        <position position="11"/>
    </location>
</feature>
<dbReference type="EC" id="2.7.1.202" evidence="1"/>
<dbReference type="EMBL" id="AE005674">
    <property type="protein sequence ID" value="AAN43961.2"/>
    <property type="molecule type" value="Genomic_DNA"/>
</dbReference>
<dbReference type="EMBL" id="AE014073">
    <property type="protein sequence ID" value="AAP17772.1"/>
    <property type="molecule type" value="Genomic_DNA"/>
</dbReference>
<dbReference type="RefSeq" id="NP_708254.2">
    <property type="nucleotide sequence ID" value="NC_004337.2"/>
</dbReference>
<dbReference type="RefSeq" id="WP_005047083.1">
    <property type="nucleotide sequence ID" value="NZ_WPGW01000027.1"/>
</dbReference>
<dbReference type="BMRB" id="Q821A9"/>
<dbReference type="SMR" id="Q821A9"/>
<dbReference type="STRING" id="198214.SF2453"/>
<dbReference type="PaxDb" id="198214-SF2453"/>
<dbReference type="GeneID" id="1025578"/>
<dbReference type="KEGG" id="sfl:SF2453"/>
<dbReference type="KEGG" id="sfx:S2592"/>
<dbReference type="PATRIC" id="fig|198214.7.peg.2931"/>
<dbReference type="HOGENOM" id="CLU_013155_2_1_6"/>
<dbReference type="Proteomes" id="UP000001006">
    <property type="component" value="Chromosome"/>
</dbReference>
<dbReference type="Proteomes" id="UP000002673">
    <property type="component" value="Chromosome"/>
</dbReference>
<dbReference type="GO" id="GO:0005737">
    <property type="term" value="C:cytoplasm"/>
    <property type="evidence" value="ECO:0007669"/>
    <property type="project" value="UniProtKB-SubCell"/>
</dbReference>
<dbReference type="GO" id="GO:0005886">
    <property type="term" value="C:plasma membrane"/>
    <property type="evidence" value="ECO:0007669"/>
    <property type="project" value="TreeGrafter"/>
</dbReference>
<dbReference type="GO" id="GO:0016301">
    <property type="term" value="F:kinase activity"/>
    <property type="evidence" value="ECO:0007669"/>
    <property type="project" value="UniProtKB-KW"/>
</dbReference>
<dbReference type="GO" id="GO:0022877">
    <property type="term" value="F:protein-N(PI)-phosphohistidine-fructose phosphotransferase system transporter activity"/>
    <property type="evidence" value="ECO:0007669"/>
    <property type="project" value="InterPro"/>
</dbReference>
<dbReference type="GO" id="GO:0090582">
    <property type="term" value="F:protein-phosphocysteine-D-fructose-phosphotransferase system transporter activity"/>
    <property type="evidence" value="ECO:0000250"/>
    <property type="project" value="UniProtKB"/>
</dbReference>
<dbReference type="GO" id="GO:0009401">
    <property type="term" value="P:phosphoenolpyruvate-dependent sugar phosphotransferase system"/>
    <property type="evidence" value="ECO:0000250"/>
    <property type="project" value="UniProtKB"/>
</dbReference>
<dbReference type="CDD" id="cd05569">
    <property type="entry name" value="PTS_IIB_fructose"/>
    <property type="match status" value="1"/>
</dbReference>
<dbReference type="FunFam" id="3.40.50.2300:FF:000092">
    <property type="entry name" value="Fructose-like phosphotransferase enzyme IIB component 1"/>
    <property type="match status" value="1"/>
</dbReference>
<dbReference type="Gene3D" id="3.40.50.2300">
    <property type="match status" value="1"/>
</dbReference>
<dbReference type="InterPro" id="IPR050864">
    <property type="entry name" value="Bacterial_PTS_Sugar_Transport"/>
</dbReference>
<dbReference type="InterPro" id="IPR036095">
    <property type="entry name" value="PTS_EIIB-like_sf"/>
</dbReference>
<dbReference type="InterPro" id="IPR013011">
    <property type="entry name" value="PTS_EIIB_2"/>
</dbReference>
<dbReference type="InterPro" id="IPR003501">
    <property type="entry name" value="PTS_EIIB_2/3"/>
</dbReference>
<dbReference type="InterPro" id="IPR003353">
    <property type="entry name" value="PTS_IIB_fruc"/>
</dbReference>
<dbReference type="NCBIfam" id="TIGR00829">
    <property type="entry name" value="FRU"/>
    <property type="match status" value="1"/>
</dbReference>
<dbReference type="PANTHER" id="PTHR30505">
    <property type="entry name" value="FRUCTOSE-LIKE PERMEASE"/>
    <property type="match status" value="1"/>
</dbReference>
<dbReference type="PANTHER" id="PTHR30505:SF0">
    <property type="entry name" value="FRUCTOSE-LIKE PTS SYSTEM EIIBC COMPONENT-RELATED"/>
    <property type="match status" value="1"/>
</dbReference>
<dbReference type="Pfam" id="PF02302">
    <property type="entry name" value="PTS_IIB"/>
    <property type="match status" value="1"/>
</dbReference>
<dbReference type="SUPFAM" id="SSF52794">
    <property type="entry name" value="PTS system IIB component-like"/>
    <property type="match status" value="1"/>
</dbReference>
<dbReference type="PROSITE" id="PS51099">
    <property type="entry name" value="PTS_EIIB_TYPE_2"/>
    <property type="match status" value="1"/>
</dbReference>
<evidence type="ECO:0000250" key="1">
    <source>
        <dbReference type="UniProtKB" id="P20966"/>
    </source>
</evidence>
<evidence type="ECO:0000255" key="2">
    <source>
        <dbReference type="PROSITE-ProRule" id="PRU00422"/>
    </source>
</evidence>
<evidence type="ECO:0000305" key="3"/>
<keyword id="KW-0963">Cytoplasm</keyword>
<keyword id="KW-0418">Kinase</keyword>
<keyword id="KW-0597">Phosphoprotein</keyword>
<keyword id="KW-0598">Phosphotransferase system</keyword>
<keyword id="KW-1185">Reference proteome</keyword>
<keyword id="KW-0762">Sugar transport</keyword>
<keyword id="KW-0808">Transferase</keyword>
<keyword id="KW-0813">Transport</keyword>
<reference key="1">
    <citation type="journal article" date="2002" name="Nucleic Acids Res.">
        <title>Genome sequence of Shigella flexneri 2a: insights into pathogenicity through comparison with genomes of Escherichia coli K12 and O157.</title>
        <authorList>
            <person name="Jin Q."/>
            <person name="Yuan Z."/>
            <person name="Xu J."/>
            <person name="Wang Y."/>
            <person name="Shen Y."/>
            <person name="Lu W."/>
            <person name="Wang J."/>
            <person name="Liu H."/>
            <person name="Yang J."/>
            <person name="Yang F."/>
            <person name="Zhang X."/>
            <person name="Zhang J."/>
            <person name="Yang G."/>
            <person name="Wu H."/>
            <person name="Qu D."/>
            <person name="Dong J."/>
            <person name="Sun L."/>
            <person name="Xue Y."/>
            <person name="Zhao A."/>
            <person name="Gao Y."/>
            <person name="Zhu J."/>
            <person name="Kan B."/>
            <person name="Ding K."/>
            <person name="Chen S."/>
            <person name="Cheng H."/>
            <person name="Yao Z."/>
            <person name="He B."/>
            <person name="Chen R."/>
            <person name="Ma D."/>
            <person name="Qiang B."/>
            <person name="Wen Y."/>
            <person name="Hou Y."/>
            <person name="Yu J."/>
        </authorList>
    </citation>
    <scope>NUCLEOTIDE SEQUENCE [LARGE SCALE GENOMIC DNA]</scope>
    <source>
        <strain>301 / Serotype 2a</strain>
    </source>
</reference>
<reference key="2">
    <citation type="journal article" date="2003" name="Infect. Immun.">
        <title>Complete genome sequence and comparative genomics of Shigella flexneri serotype 2a strain 2457T.</title>
        <authorList>
            <person name="Wei J."/>
            <person name="Goldberg M.B."/>
            <person name="Burland V."/>
            <person name="Venkatesan M.M."/>
            <person name="Deng W."/>
            <person name="Fournier G."/>
            <person name="Mayhew G.F."/>
            <person name="Plunkett G. III"/>
            <person name="Rose D.J."/>
            <person name="Darling A."/>
            <person name="Mau B."/>
            <person name="Perna N.T."/>
            <person name="Payne S.M."/>
            <person name="Runyen-Janecky L.J."/>
            <person name="Zhou S."/>
            <person name="Schwartz D.C."/>
            <person name="Blattner F.R."/>
        </authorList>
    </citation>
    <scope>NUCLEOTIDE SEQUENCE [LARGE SCALE GENOMIC DNA]</scope>
    <source>
        <strain>ATCC 700930 / 2457T / Serotype 2a</strain>
    </source>
</reference>
<accession>Q821A9</accession>
<protein>
    <recommendedName>
        <fullName evidence="1">PTS system fructose-like EIIB component 1</fullName>
        <ecNumber evidence="1">2.7.1.202</ecNumber>
    </recommendedName>
    <alternativeName>
        <fullName evidence="1">Fructose-like phosphotransferase enzyme IIB component 1</fullName>
    </alternativeName>
</protein>